<evidence type="ECO:0000250" key="1">
    <source>
        <dbReference type="UniProtKB" id="P01160"/>
    </source>
</evidence>
<evidence type="ECO:0000250" key="2">
    <source>
        <dbReference type="UniProtKB" id="P01161"/>
    </source>
</evidence>
<evidence type="ECO:0000250" key="3">
    <source>
        <dbReference type="UniProtKB" id="P05125"/>
    </source>
</evidence>
<evidence type="ECO:0000250" key="4">
    <source>
        <dbReference type="UniProtKB" id="P24259"/>
    </source>
</evidence>
<evidence type="ECO:0000256" key="5">
    <source>
        <dbReference type="SAM" id="MobiDB-lite"/>
    </source>
</evidence>
<evidence type="ECO:0000305" key="6"/>
<feature type="signal peptide" evidence="4">
    <location>
        <begin position="1"/>
        <end position="23"/>
    </location>
</feature>
<feature type="chain" id="PRO_0000449682" description="Natriuretic peptides A" evidence="1">
    <location>
        <begin position="24"/>
        <end position="149"/>
    </location>
</feature>
<feature type="propeptide" id="PRO_0000001484" evidence="6">
    <location>
        <begin position="24"/>
        <end position="121"/>
    </location>
</feature>
<feature type="peptide" id="PRO_0000449683" description="Long-acting natriuretic peptide" evidence="1">
    <location>
        <begin position="24"/>
        <end position="53"/>
    </location>
</feature>
<feature type="peptide" id="PRO_0000449684" description="Vessel dilator" evidence="1">
    <location>
        <begin position="54"/>
        <end position="90"/>
    </location>
</feature>
<feature type="propeptide" id="PRO_0000449685" evidence="1">
    <location>
        <begin position="91"/>
        <end position="101"/>
    </location>
</feature>
<feature type="peptide" id="PRO_0000449686" description="Kaliuretic peptide" evidence="1">
    <location>
        <begin position="102"/>
        <end position="121"/>
    </location>
</feature>
<feature type="peptide" id="PRO_0000449687" description="Auriculin-C" evidence="2">
    <location>
        <begin position="117"/>
        <end position="149"/>
    </location>
</feature>
<feature type="peptide" id="PRO_0000449688" description="Urodilatin" evidence="1">
    <location>
        <begin position="118"/>
        <end position="149"/>
    </location>
</feature>
<feature type="peptide" id="PRO_0000449689" description="Auriculin-D" evidence="2">
    <location>
        <begin position="119"/>
        <end position="143"/>
    </location>
</feature>
<feature type="peptide" id="PRO_0000001485" description="Atrial natriuretic peptide" evidence="1">
    <location>
        <begin position="122"/>
        <end position="149"/>
    </location>
</feature>
<feature type="peptide" id="PRO_0000449690" description="Auriculin-B" evidence="2">
    <location>
        <begin position="125"/>
        <end position="149"/>
    </location>
</feature>
<feature type="peptide" id="PRO_0000449691" description="Auriculin-A" evidence="2">
    <location>
        <begin position="125"/>
        <end position="148"/>
    </location>
</feature>
<feature type="peptide" id="PRO_0000449692" description="Atriopeptin-3" evidence="2">
    <location>
        <begin position="126"/>
        <end position="149"/>
    </location>
</feature>
<feature type="peptide" id="PRO_0000449693" description="Atriopeptin-2" evidence="2">
    <location>
        <begin position="126"/>
        <end position="148"/>
    </location>
</feature>
<feature type="peptide" id="PRO_0000449694" description="Atriopeptin-1" evidence="2">
    <location>
        <begin position="126"/>
        <end position="146"/>
    </location>
</feature>
<feature type="region of interest" description="Disordered" evidence="5">
    <location>
        <begin position="49"/>
        <end position="103"/>
    </location>
</feature>
<feature type="region of interest" description="Important for degradation of atrial natriuretic peptide by IDE" evidence="1">
    <location>
        <begin position="145"/>
        <end position="149"/>
    </location>
</feature>
<feature type="site" description="Cleavage; by CORIN" evidence="1">
    <location>
        <begin position="121"/>
        <end position="122"/>
    </location>
</feature>
<feature type="site" description="Cleavage; by MME" evidence="1">
    <location>
        <begin position="128"/>
        <end position="129"/>
    </location>
</feature>
<feature type="modified residue" description="Phosphoserine" evidence="1">
    <location>
        <position position="127"/>
    </location>
</feature>
<feature type="disulfide bond" evidence="1">
    <location>
        <begin position="128"/>
        <end position="144"/>
    </location>
</feature>
<keyword id="KW-0966">Cell projection</keyword>
<keyword id="KW-1015">Disulfide bond</keyword>
<keyword id="KW-0372">Hormone</keyword>
<keyword id="KW-0597">Phosphoprotein</keyword>
<keyword id="KW-1185">Reference proteome</keyword>
<keyword id="KW-0964">Secreted</keyword>
<keyword id="KW-0732">Signal</keyword>
<keyword id="KW-0838">Vasoactive</keyword>
<keyword id="KW-0840">Vasodilator</keyword>
<organism>
    <name type="scientific">Canis lupus familiaris</name>
    <name type="common">Dog</name>
    <name type="synonym">Canis familiaris</name>
    <dbReference type="NCBI Taxonomy" id="9615"/>
    <lineage>
        <taxon>Eukaryota</taxon>
        <taxon>Metazoa</taxon>
        <taxon>Chordata</taxon>
        <taxon>Craniata</taxon>
        <taxon>Vertebrata</taxon>
        <taxon>Euteleostomi</taxon>
        <taxon>Mammalia</taxon>
        <taxon>Eutheria</taxon>
        <taxon>Laurasiatheria</taxon>
        <taxon>Carnivora</taxon>
        <taxon>Caniformia</taxon>
        <taxon>Canidae</taxon>
        <taxon>Canis</taxon>
    </lineage>
</organism>
<name>ANF_CANLF</name>
<accession>P07499</accession>
<gene>
    <name type="primary">NPPA</name>
</gene>
<dbReference type="EMBL" id="M12045">
    <property type="protein sequence ID" value="AAA30828.1"/>
    <property type="molecule type" value="mRNA"/>
</dbReference>
<dbReference type="PIR" id="A25302">
    <property type="entry name" value="AWDG"/>
</dbReference>
<dbReference type="RefSeq" id="NP_001300780.1">
    <property type="nucleotide sequence ID" value="NM_001313851.2"/>
</dbReference>
<dbReference type="FunCoup" id="P07499">
    <property type="interactions" value="1"/>
</dbReference>
<dbReference type="STRING" id="9615.ENSCAFP00000053231"/>
<dbReference type="PaxDb" id="9612-ENSCAFP00000024318"/>
<dbReference type="Ensembl" id="ENSCAFT00000026190.5">
    <property type="protein sequence ID" value="ENSCAFP00000024318.3"/>
    <property type="gene ID" value="ENSCAFG00000016539.5"/>
</dbReference>
<dbReference type="Ensembl" id="ENSCAFT00040010974.1">
    <property type="protein sequence ID" value="ENSCAFP00040009516.1"/>
    <property type="gene ID" value="ENSCAFG00040005849.1"/>
</dbReference>
<dbReference type="Ensembl" id="ENSCAFT00845003501.1">
    <property type="protein sequence ID" value="ENSCAFP00845002777.1"/>
    <property type="gene ID" value="ENSCAFG00845001994.1"/>
</dbReference>
<dbReference type="GeneID" id="608289"/>
<dbReference type="KEGG" id="cfa:608289"/>
<dbReference type="CTD" id="4878"/>
<dbReference type="VEuPathDB" id="HostDB:ENSCAFG00845001994"/>
<dbReference type="VGNC" id="VGNC:43925">
    <property type="gene designation" value="NPPA"/>
</dbReference>
<dbReference type="eggNOG" id="ENOG502S9RQ">
    <property type="taxonomic scope" value="Eukaryota"/>
</dbReference>
<dbReference type="GeneTree" id="ENSGT00940000154513"/>
<dbReference type="HOGENOM" id="CLU_144536_0_0_1"/>
<dbReference type="InParanoid" id="P07499"/>
<dbReference type="OMA" id="GPWDASD"/>
<dbReference type="OrthoDB" id="8865096at2759"/>
<dbReference type="TreeFam" id="TF106304"/>
<dbReference type="Reactome" id="R-CFA-5578768">
    <property type="pathway name" value="Physiological factors"/>
</dbReference>
<dbReference type="Proteomes" id="UP000002254">
    <property type="component" value="Chromosome 2"/>
</dbReference>
<dbReference type="Proteomes" id="UP000694429">
    <property type="component" value="Unplaced"/>
</dbReference>
<dbReference type="Proteomes" id="UP000694542">
    <property type="component" value="Chromosome 2"/>
</dbReference>
<dbReference type="Proteomes" id="UP000805418">
    <property type="component" value="Chromosome 2"/>
</dbReference>
<dbReference type="Bgee" id="ENSCAFG00000016539">
    <property type="expression patterns" value="Expressed in right cardiac atrium and 36 other cell types or tissues"/>
</dbReference>
<dbReference type="GO" id="GO:0042995">
    <property type="term" value="C:cell projection"/>
    <property type="evidence" value="ECO:0007669"/>
    <property type="project" value="UniProtKB-SubCell"/>
</dbReference>
<dbReference type="GO" id="GO:0005737">
    <property type="term" value="C:cytoplasm"/>
    <property type="evidence" value="ECO:0000318"/>
    <property type="project" value="GO_Central"/>
</dbReference>
<dbReference type="GO" id="GO:0005615">
    <property type="term" value="C:extracellular space"/>
    <property type="evidence" value="ECO:0000318"/>
    <property type="project" value="GO_Central"/>
</dbReference>
<dbReference type="GO" id="GO:0043204">
    <property type="term" value="C:perikaryon"/>
    <property type="evidence" value="ECO:0007669"/>
    <property type="project" value="UniProtKB-SubCell"/>
</dbReference>
<dbReference type="GO" id="GO:0005179">
    <property type="term" value="F:hormone activity"/>
    <property type="evidence" value="ECO:0000318"/>
    <property type="project" value="GO_Central"/>
</dbReference>
<dbReference type="GO" id="GO:0051427">
    <property type="term" value="F:hormone receptor binding"/>
    <property type="evidence" value="ECO:0000318"/>
    <property type="project" value="GO_Central"/>
</dbReference>
<dbReference type="GO" id="GO:0006182">
    <property type="term" value="P:cGMP biosynthetic process"/>
    <property type="evidence" value="ECO:0000250"/>
    <property type="project" value="UniProtKB"/>
</dbReference>
<dbReference type="GO" id="GO:0019934">
    <property type="term" value="P:cGMP-mediated signaling"/>
    <property type="evidence" value="ECO:0000318"/>
    <property type="project" value="GO_Central"/>
</dbReference>
<dbReference type="GO" id="GO:0007565">
    <property type="term" value="P:female pregnancy"/>
    <property type="evidence" value="ECO:0000250"/>
    <property type="project" value="UniProtKB"/>
</dbReference>
<dbReference type="GO" id="GO:0003085">
    <property type="term" value="P:negative regulation of systemic arterial blood pressure"/>
    <property type="evidence" value="ECO:0000318"/>
    <property type="project" value="GO_Central"/>
</dbReference>
<dbReference type="GO" id="GO:0007218">
    <property type="term" value="P:neuropeptide signaling pathway"/>
    <property type="evidence" value="ECO:0000318"/>
    <property type="project" value="GO_Central"/>
</dbReference>
<dbReference type="GO" id="GO:0007168">
    <property type="term" value="P:receptor guanylyl cyclase signaling pathway"/>
    <property type="evidence" value="ECO:0000250"/>
    <property type="project" value="UniProtKB"/>
</dbReference>
<dbReference type="GO" id="GO:0008217">
    <property type="term" value="P:regulation of blood pressure"/>
    <property type="evidence" value="ECO:0000250"/>
    <property type="project" value="UniProtKB"/>
</dbReference>
<dbReference type="GO" id="GO:0042311">
    <property type="term" value="P:vasodilation"/>
    <property type="evidence" value="ECO:0007669"/>
    <property type="project" value="UniProtKB-KW"/>
</dbReference>
<dbReference type="InterPro" id="IPR000663">
    <property type="entry name" value="Natr_peptide"/>
</dbReference>
<dbReference type="InterPro" id="IPR030480">
    <property type="entry name" value="Natr_peptide_CS"/>
</dbReference>
<dbReference type="InterPro" id="IPR050787">
    <property type="entry name" value="Natriuretic_peptide"/>
</dbReference>
<dbReference type="InterPro" id="IPR002407">
    <property type="entry name" value="Natriuretic_peptide_atrial"/>
</dbReference>
<dbReference type="PANTHER" id="PTHR14066">
    <property type="entry name" value="ATRIAL NATRIURETIC FACTOR PRECURSOR"/>
    <property type="match status" value="1"/>
</dbReference>
<dbReference type="PANTHER" id="PTHR14066:SF2">
    <property type="entry name" value="NATRIURETIC PEPTIDES A"/>
    <property type="match status" value="1"/>
</dbReference>
<dbReference type="Pfam" id="PF00212">
    <property type="entry name" value="ANP"/>
    <property type="match status" value="1"/>
</dbReference>
<dbReference type="PRINTS" id="PR00711">
    <property type="entry name" value="ANATPEPTIDE"/>
</dbReference>
<dbReference type="PRINTS" id="PR00710">
    <property type="entry name" value="NATPEPTIDES"/>
</dbReference>
<dbReference type="SMART" id="SM00183">
    <property type="entry name" value="NAT_PEP"/>
    <property type="match status" value="1"/>
</dbReference>
<dbReference type="PROSITE" id="PS00263">
    <property type="entry name" value="NATRIURETIC_PEPTIDE"/>
    <property type="match status" value="1"/>
</dbReference>
<protein>
    <recommendedName>
        <fullName evidence="6">Natriuretic peptides A</fullName>
    </recommendedName>
    <alternativeName>
        <fullName evidence="1">Atrial natriuretic factor prohormone</fullName>
        <shortName evidence="2">preproANF</shortName>
        <shortName evidence="1">proANF</shortName>
    </alternativeName>
    <alternativeName>
        <fullName evidence="1">Atrial natriuretic peptide prohormone</fullName>
        <shortName evidence="1">preproANP</shortName>
        <shortName evidence="1">proANP</shortName>
    </alternativeName>
    <alternativeName>
        <fullName evidence="2">Atriopeptigen</fullName>
    </alternativeName>
    <alternativeName>
        <fullName evidence="1">Cardiodilatin</fullName>
        <shortName evidence="1">CDD</shortName>
    </alternativeName>
    <alternativeName>
        <fullName evidence="1">preproCDD-ANF</fullName>
    </alternativeName>
    <component>
        <recommendedName>
            <fullName evidence="1">Long-acting natriuretic peptide</fullName>
            <shortName evidence="1">LANP</shortName>
        </recommendedName>
        <alternativeName>
            <fullName evidence="6">Long-acting natriuretic hormone</fullName>
            <shortName evidence="6">LANH</shortName>
        </alternativeName>
        <alternativeName>
            <fullName evidence="1">Pro atrial natriuretic factor 1-30</fullName>
            <shortName evidence="1">proANF 1-30</shortName>
        </alternativeName>
        <alternativeName>
            <fullName evidence="6">Pro atrial natriuretic peptide 1-30</fullName>
            <shortName evidence="6">proANP 1-30</shortName>
        </alternativeName>
    </component>
    <component>
        <recommendedName>
            <fullName evidence="1">Vessel dilator</fullName>
            <shortName evidence="1">VSDL</shortName>
        </recommendedName>
        <alternativeName>
            <fullName evidence="1">Pro atrial natriuretic factor 31-67</fullName>
            <shortName evidence="1">proANF 31-67</shortName>
        </alternativeName>
        <alternativeName>
            <fullName evidence="6">Pro atrial natriuretic peptide 31-67</fullName>
            <shortName evidence="6">proANP 31-67</shortName>
        </alternativeName>
    </component>
    <component>
        <recommendedName>
            <fullName evidence="1">Kaliuretic peptide</fullName>
            <shortName evidence="1">KP</shortName>
        </recommendedName>
        <alternativeName>
            <fullName evidence="1">Pro atrial natriuretic factor 79-98</fullName>
            <shortName evidence="1">proANF 79-98</shortName>
        </alternativeName>
        <alternativeName>
            <fullName evidence="6">Pro atrial natriuretic peptide 79-98</fullName>
            <shortName evidence="6">proANP 79-98</shortName>
        </alternativeName>
    </component>
    <component>
        <recommendedName>
            <fullName evidence="1">Urodilatin</fullName>
            <shortName evidence="1">URO</shortName>
        </recommendedName>
        <alternativeName>
            <fullName evidence="1">CDD 95-126</fullName>
        </alternativeName>
        <alternativeName>
            <fullName evidence="1">CDD-ANP (95-126)</fullName>
        </alternativeName>
        <alternativeName>
            <fullName evidence="1">Pro atrial natriuretic peptide 95-126</fullName>
            <shortName evidence="1">proANP 95-126</shortName>
        </alternativeName>
    </component>
    <component>
        <recommendedName>
            <fullName evidence="6">Auriculin-C</fullName>
        </recommendedName>
        <alternativeName>
            <fullName evidence="2">Atrial natriuretic factor 1-33</fullName>
            <shortName evidence="2">ANF 1-33</shortName>
        </alternativeName>
    </component>
    <component>
        <recommendedName>
            <fullName evidence="6">Auriculin-D</fullName>
        </recommendedName>
        <alternativeName>
            <fullName evidence="2">Atrial natriuretic factor 3-33</fullName>
            <shortName evidence="2">ANF 3-33</shortName>
        </alternativeName>
    </component>
    <component>
        <recommendedName>
            <fullName evidence="1">Atrial natriuretic peptide</fullName>
            <shortName evidence="1">ANP</shortName>
        </recommendedName>
        <alternativeName>
            <fullName evidence="1">Alpha-atrial natriuretic peptide</fullName>
        </alternativeName>
        <alternativeName>
            <fullName evidence="1">Alpha-hANP</fullName>
        </alternativeName>
        <alternativeName>
            <fullName evidence="1">Atrial natriuretic factor</fullName>
            <shortName evidence="1">ANF</shortName>
        </alternativeName>
        <alternativeName>
            <fullName evidence="1">CDD-ANF</fullName>
        </alternativeName>
        <alternativeName>
            <fullName evidence="1">CDD-ANP (99-126)</fullName>
        </alternativeName>
        <alternativeName>
            <fullName evidence="2">Cardionatrin</fullName>
        </alternativeName>
        <alternativeName>
            <fullName evidence="1">Pro atrial natriuretic factor 99-126</fullName>
            <shortName evidence="1">proANF 99-126</shortName>
        </alternativeName>
    </component>
    <component>
        <recommendedName>
            <fullName evidence="6">Auriculin-B</fullName>
        </recommendedName>
        <alternativeName>
            <fullName evidence="2">Atrial natriuretic factor 8-33</fullName>
            <shortName evidence="2">ANF 8-33</shortName>
        </alternativeName>
    </component>
    <component>
        <recommendedName>
            <fullName evidence="2">Auriculin-A</fullName>
        </recommendedName>
    </component>
    <component>
        <recommendedName>
            <fullName evidence="2">Atriopeptin-1</fullName>
        </recommendedName>
        <alternativeName>
            <fullName evidence="2">Atriopeptin I</fullName>
        </alternativeName>
    </component>
    <component>
        <recommendedName>
            <fullName evidence="2">Atriopeptin-2</fullName>
        </recommendedName>
        <alternativeName>
            <fullName evidence="2">Atriopeptin II</fullName>
        </alternativeName>
    </component>
    <component>
        <recommendedName>
            <fullName evidence="2">Atriopeptin-3</fullName>
        </recommendedName>
        <alternativeName>
            <fullName evidence="2">Atriopeptin III</fullName>
        </alternativeName>
    </component>
</protein>
<reference key="1">
    <citation type="journal article" date="1985" name="Biochem. Biophys. Res. Commun.">
        <title>Structure of dog and rabbit precursors of atrial natriuretic polypeptides deduced from nucleotide sequence of cloned cDNA.</title>
        <authorList>
            <person name="Oikawa S."/>
            <person name="Imai M."/>
            <person name="Inuzuka C."/>
            <person name="Tawaragi Y."/>
            <person name="Nakazato H."/>
            <person name="Matsuo H."/>
        </authorList>
    </citation>
    <scope>NUCLEOTIDE SEQUENCE [MRNA]</scope>
</reference>
<sequence>MGSPIAASFLLFLAVQLLGQTGANPVYGSVSNADLLDFKNLLDRLEDKMPLEDEAESPQALSEQNAEAGAALSPLPEVPPWTGEVSPAQRDGGALGRSPWDSSDRSALLKSKLRALLAAPRSLRRSSCFGGRMDRIGAQSGLGCNSFRY</sequence>
<proteinExistence type="evidence at transcript level"/>
<comment type="function">
    <molecule>Atrial natriuretic peptide</molecule>
    <text evidence="1 3">Hormone that plays a key role in mediating cardio-renal homeostasis, and is involved in vascular remodeling and regulating energy metabolism (By similarity). Acts by specifically binding and stimulating NPR1 to produce cGMP, which in turn activates effector proteins, such as PRKG1, that drive various biological responses (By similarity). Regulates vasodilation, natriuresis, diuresis and aldosterone synthesis and is therefore essential for regulating blood pressure, controlling the extracellular fluid volume and maintaining the fluid-electrolyte balance (By similarity). Also involved in inhibiting cardiac remodeling and cardiac hypertrophy by inducing cardiomyocyte apoptosis and attenuating the growth of cardiomyocytes and fibroblasts (By similarity). Plays a role in female pregnancy by promoting trophoblast invasion and spiral artery remodeling in uterus, and thus prevents pregnancy-induced hypertension (By similarity). In adipose tissue, acts in various cGMP- and PKG-dependent pathways to regulate lipid metabolism and energy homeostasis (By similarity). This includes up-regulating lipid metabolism and mitochondrial oxygen utilization by activating the AMP-activated protein kinase (AMPK), and increasing energy expenditure by acting via MAPK11 to promote the UCP1-dependent thermogenesis of brown adipose tissue (By similarity). Binds the clearance receptor NPR3 which removes the hormone from circulation (By similarity).</text>
</comment>
<comment type="function">
    <molecule>Long-acting natriuretic peptide</molecule>
    <text evidence="1 2">May have a role in cardio-renal homeostasis through regulation of natriuresis, diuresis, vasodilation, and inhibiting aldosterone synthesis. In vitro, promotes the production of cGMP and induces vasodilation. May promote natriuresis, at least in part, by enhancing prostaglandin E2 synthesis resulting in the inhibition of renal Na+-K+-ATPase (By similarity). However reports on the involvement of this peptide in mammal blood volume and blood pressure homeostasis are conflicting; according to a report, in vivo it is not sufficient to activate cGMP and does not inhibit collecting duct transport nor effect diuresis and natriuresis (By similarity). Appears to bind to specific receptors that are distinct from the receptors bound by atrial natriuretic peptide and vessel dilator. Possibly enhances protein excretion in urine by decreasing proximal tubular protein reabsorption (By similarity).</text>
</comment>
<comment type="function">
    <molecule>Vessel dilator</molecule>
    <text evidence="1">May have a role in cardio-renal homeostasis through regulation of natriuresis, diuresis, and vasodilation. In vitro, promotes the production of cGMP and induces vasodilation. May promote natriuresis, at least in part, by enhancing prostaglandin E2 synthesis resulting in the inhibition of renal Na+-K+-ATPase. However reports on the involvement of this peptide in mammal blood volume and blood pressure homeostasis are conflicting; according to a report it is not sufficient to activate cGMP and does not inhibit collecting duct transport nor effect diuresis and natriuresis. Appears to bind to specific receptors that are distinct from the receptors bound by the atrial natriuretic and long-acting natriuretic peptides. Possibly functions in protein excretion in urine by maintaining the integrity of the proximal tubules and enhancing protein excretion by decreasing proximal tubular protein reabsorption.</text>
</comment>
<comment type="function">
    <molecule>Kaliuretic peptide</molecule>
    <text evidence="1">May have a role in cardio-renal homeostasis through regulation of diuresis and inhibiting aldosterone synthesis. In vitro, promotes the production of cGMP and induces vasodilation. May promote natriuresis, at least in part, by enhancing prostaglandin E2 synthesis resulting in the inhibition of renal Na+-K+-ATPase. May have a role in potassium excretion but not sodium excretion (natriuresis). Possibly enhances protein excretion in urine by decreasing proximal tubular protein reabsorption.</text>
</comment>
<comment type="function">
    <molecule>Urodilatin</molecule>
    <text evidence="1">Hormone produced in the kidneys that appears to be important for maintaining cardio-renal homeostasis. Mediates vasodilation, natriuresis and diuresis primarily in the renal system, in order to maintain the extracellular fluid volume and control the fluid-electrolyte balance. Specifically binds and stimulates cGMP production by renal transmembrane receptors, likely NPR1. Urodilatin not ANP, may be the natriuretic peptide responsible for the regulation of sodium and water homeostasis in the kidney.</text>
</comment>
<comment type="function">
    <molecule>Auriculin-D</molecule>
    <text evidence="2">May have a role in cardio-renal homeostasis through regulation of natriuresis and vasodilation. In vivo promotes natriuresis and in vitro, vasodilates renal artery strips.</text>
</comment>
<comment type="function">
    <molecule>Auriculin-B</molecule>
    <text evidence="2">May have a role in cardio-renal homeostasis through regulation of natriuresis and vasodilation. In vivo promotes natriuresis and in vitro, vasodilates renal artery strips.</text>
</comment>
<comment type="function">
    <molecule>Auriculin-A</molecule>
    <text evidence="2">May have a role in cardio-renal homeostasis through regulation of regulation of natriuresis and vasodilation. In vivo promotes natriuresis. In vitro, vasodilates intestinal smooth muscle but not smooth muscle strips.</text>
</comment>
<comment type="function">
    <molecule>Atriopeptin-2</molecule>
    <text evidence="2">May have a role in cardio-renal homeostasis through regulation of natriuresis and vasodilation. In vivo promotes natriuresis. In vitro, selectively vasodilates intestinal and vascular smooth muscle strips.</text>
</comment>
<comment type="function">
    <molecule>Atriopeptin-1</molecule>
    <text evidence="2">May have a role in cardio-renal homeostasis through regulation of natriuresis and vasodilation. In vivo promotes natriuresis. In vitro, selectively vasodilates intestinal smooth muscle but not vascular smooth muscle strips.</text>
</comment>
<comment type="subunit">
    <molecule>Atrial natriuretic peptide</molecule>
    <text evidence="1">Homodimer; disulfide-linked antiparallel dimer.</text>
</comment>
<comment type="subcellular location">
    <molecule>Long-acting natriuretic peptide</molecule>
    <subcellularLocation>
        <location evidence="1">Secreted</location>
    </subcellularLocation>
    <text evidence="1">Detected in blood.</text>
</comment>
<comment type="subcellular location">
    <molecule>Vessel dilator</molecule>
    <subcellularLocation>
        <location evidence="1">Secreted</location>
    </subcellularLocation>
    <text evidence="1">Detected in blood.</text>
</comment>
<comment type="subcellular location">
    <molecule>Kaliuretic peptide</molecule>
    <subcellularLocation>
        <location evidence="1">Secreted</location>
    </subcellularLocation>
    <text evidence="1">Detected in blood.</text>
</comment>
<comment type="subcellular location">
    <molecule>Urodilatin</molecule>
    <subcellularLocation>
        <location evidence="1">Secreted</location>
    </subcellularLocation>
    <text evidence="1">Detected in urine. Not detected in blood. Increased electrolytes, osmolality and intracellular cAMP levels increase peptide secretion/excretion.</text>
</comment>
<comment type="subcellular location">
    <molecule>Atrial natriuretic peptide</molecule>
    <subcellularLocation>
        <location evidence="1">Secreted</location>
    </subcellularLocation>
    <subcellularLocation>
        <location evidence="1">Perikaryon</location>
    </subcellularLocation>
    <subcellularLocation>
        <location evidence="1">Cell projection</location>
    </subcellularLocation>
    <text evidence="1 2">Detected in blood. Detected in urine in one study. However, in another study, was not detected in urine. Detected in cytoplasmic bodies and neuronal processes of pyramidal neurons (layers II-VI) (By similarity). Increased secretion in response to the vasopressin AVP (By similarity). Likely to be secreted in response to an increase in atrial pressure or atrial stretch. In kidney cells, secretion increases in response to activated guanylyl cyclases and increased intracellular cAMP levels. Plasma levels increase 15 minutes after a high-salt meal, and decrease back to normal plasma levels 1 hr later (By similarity).</text>
</comment>
<comment type="subcellular location">
    <molecule>Atriopeptin-3</molecule>
    <subcellularLocation>
        <location evidence="2">Secreted</location>
    </subcellularLocation>
    <text evidence="2">Detected in blood. Slight increase in secretion in response to the vasopressin AVP.</text>
</comment>
<comment type="PTM">
    <text evidence="1 2">The precursor molecule is proteolytically cleaved by CORIN at Arg-121 to produce the atrial natriuretic peptide (By similarity). Undergoes further proteolytic cleavage by unknown proteases to give rise to long-acting natriuretic peptide, vessel dilator and kaliuretic peptide (By similarity). Additional processing gives rise to the auriculin and atriopeptin peptides (By similarity). In the kidneys, alternative processing by an unknown protease results in the peptide urodilatin (By similarity).</text>
</comment>
<comment type="PTM">
    <molecule>Atrial natriuretic peptide</molecule>
    <text evidence="1">Cleavage by MME initiates degradation of the factor and thereby regulates its activity. Degradation by IDE results in reduced activation of NPR1 (in vitro). During IDE degradation, the resulting products can temporarily stimulate NPR2 to produce cGMP, before the fragments are completely degraded and inactivated by IDE (in vitro).</text>
</comment>
<comment type="PTM">
    <molecule>Urodilatin</molecule>
    <text evidence="1">Degraded by IDE.</text>
</comment>
<comment type="PTM">
    <molecule>Urodilatin</molecule>
    <text evidence="1">Phosphorylation on Ser-127 decreases vasorelaxant activity.</text>
</comment>
<comment type="similarity">
    <text evidence="6">Belongs to the natriuretic peptide family.</text>
</comment>
<comment type="caution">
    <molecule>Long-acting natriuretic peptide</molecule>
    <text evidence="1 2">Results concerning the involvement of this peptide in blood volume and blood pressure homeostasis are conflicting. Several studies utilising in vitro and heterologous expression systems show that it is able to activate cGMP and promote vasodilation and natriuresis (By similarity). However, an in vivo study in rat found that it is not sufficient to induce any diuretic, natriuretic, nor hypotensive responses, and is unable to bind NPR1 nor increase guanylyl cyclase activity (By similarity).</text>
</comment>
<comment type="caution">
    <molecule>Vessel dilator</molecule>
    <text evidence="1 2">Results concerning the involvement of this peptide in blood volume and blood pressure homeostasis are conflicting. Several studies utilising in vitro and heterologous expression systems show that it is able to activate cGMP and promote vasodilation and natriuresis (By similarity). However, a heterologous and in vivo expression study in rat found that it is not sufficient to induce any diuretic, natriuretic, nor hypotensive responses, and is unable to bind NPR1 nor increase guanylyl cyclase activity (By similarity).</text>
</comment>